<evidence type="ECO:0000255" key="1">
    <source>
        <dbReference type="HAMAP-Rule" id="MF_00375"/>
    </source>
</evidence>
<dbReference type="EC" id="5.4.3.8" evidence="1"/>
<dbReference type="EMBL" id="CP001364">
    <property type="protein sequence ID" value="ACM54195.1"/>
    <property type="molecule type" value="Genomic_DNA"/>
</dbReference>
<dbReference type="SMR" id="B9LKS0"/>
<dbReference type="KEGG" id="chl:Chy400_2807"/>
<dbReference type="HOGENOM" id="CLU_016922_1_5_0"/>
<dbReference type="OrthoDB" id="9807885at2"/>
<dbReference type="UniPathway" id="UPA00251">
    <property type="reaction ID" value="UER00317"/>
</dbReference>
<dbReference type="UniPathway" id="UPA00668"/>
<dbReference type="GO" id="GO:0005737">
    <property type="term" value="C:cytoplasm"/>
    <property type="evidence" value="ECO:0007669"/>
    <property type="project" value="UniProtKB-SubCell"/>
</dbReference>
<dbReference type="GO" id="GO:0042286">
    <property type="term" value="F:glutamate-1-semialdehyde 2,1-aminomutase activity"/>
    <property type="evidence" value="ECO:0007669"/>
    <property type="project" value="UniProtKB-UniRule"/>
</dbReference>
<dbReference type="GO" id="GO:0030170">
    <property type="term" value="F:pyridoxal phosphate binding"/>
    <property type="evidence" value="ECO:0007669"/>
    <property type="project" value="InterPro"/>
</dbReference>
<dbReference type="GO" id="GO:0008483">
    <property type="term" value="F:transaminase activity"/>
    <property type="evidence" value="ECO:0007669"/>
    <property type="project" value="InterPro"/>
</dbReference>
<dbReference type="GO" id="GO:0015995">
    <property type="term" value="P:chlorophyll biosynthetic process"/>
    <property type="evidence" value="ECO:0007669"/>
    <property type="project" value="UniProtKB-UniPathway"/>
</dbReference>
<dbReference type="GO" id="GO:0006782">
    <property type="term" value="P:protoporphyrinogen IX biosynthetic process"/>
    <property type="evidence" value="ECO:0007669"/>
    <property type="project" value="UniProtKB-UniRule"/>
</dbReference>
<dbReference type="CDD" id="cd00610">
    <property type="entry name" value="OAT_like"/>
    <property type="match status" value="1"/>
</dbReference>
<dbReference type="FunFam" id="3.40.640.10:FF:000021">
    <property type="entry name" value="Glutamate-1-semialdehyde 2,1-aminomutase"/>
    <property type="match status" value="1"/>
</dbReference>
<dbReference type="Gene3D" id="3.90.1150.10">
    <property type="entry name" value="Aspartate Aminotransferase, domain 1"/>
    <property type="match status" value="1"/>
</dbReference>
<dbReference type="Gene3D" id="3.40.640.10">
    <property type="entry name" value="Type I PLP-dependent aspartate aminotransferase-like (Major domain)"/>
    <property type="match status" value="1"/>
</dbReference>
<dbReference type="HAMAP" id="MF_00375">
    <property type="entry name" value="HemL_aminotrans_3"/>
    <property type="match status" value="1"/>
</dbReference>
<dbReference type="InterPro" id="IPR004639">
    <property type="entry name" value="4pyrrol_synth_GluAld_NH2Trfase"/>
</dbReference>
<dbReference type="InterPro" id="IPR005814">
    <property type="entry name" value="Aminotrans_3"/>
</dbReference>
<dbReference type="InterPro" id="IPR049704">
    <property type="entry name" value="Aminotrans_3_PPA_site"/>
</dbReference>
<dbReference type="InterPro" id="IPR015424">
    <property type="entry name" value="PyrdxlP-dep_Trfase"/>
</dbReference>
<dbReference type="InterPro" id="IPR015421">
    <property type="entry name" value="PyrdxlP-dep_Trfase_major"/>
</dbReference>
<dbReference type="InterPro" id="IPR015422">
    <property type="entry name" value="PyrdxlP-dep_Trfase_small"/>
</dbReference>
<dbReference type="NCBIfam" id="TIGR00713">
    <property type="entry name" value="hemL"/>
    <property type="match status" value="1"/>
</dbReference>
<dbReference type="NCBIfam" id="NF000818">
    <property type="entry name" value="PRK00062.1"/>
    <property type="match status" value="1"/>
</dbReference>
<dbReference type="PANTHER" id="PTHR43713">
    <property type="entry name" value="GLUTAMATE-1-SEMIALDEHYDE 2,1-AMINOMUTASE"/>
    <property type="match status" value="1"/>
</dbReference>
<dbReference type="PANTHER" id="PTHR43713:SF3">
    <property type="entry name" value="GLUTAMATE-1-SEMIALDEHYDE 2,1-AMINOMUTASE 1, CHLOROPLASTIC-RELATED"/>
    <property type="match status" value="1"/>
</dbReference>
<dbReference type="Pfam" id="PF00202">
    <property type="entry name" value="Aminotran_3"/>
    <property type="match status" value="1"/>
</dbReference>
<dbReference type="SUPFAM" id="SSF53383">
    <property type="entry name" value="PLP-dependent transferases"/>
    <property type="match status" value="1"/>
</dbReference>
<dbReference type="PROSITE" id="PS00600">
    <property type="entry name" value="AA_TRANSFER_CLASS_3"/>
    <property type="match status" value="1"/>
</dbReference>
<proteinExistence type="inferred from homology"/>
<reference key="1">
    <citation type="submission" date="2009-01" db="EMBL/GenBank/DDBJ databases">
        <title>Complete sequence of Chloroflexus sp. Y-400-fl.</title>
        <authorList>
            <consortium name="US DOE Joint Genome Institute"/>
            <person name="Lucas S."/>
            <person name="Copeland A."/>
            <person name="Lapidus A."/>
            <person name="Glavina del Rio T."/>
            <person name="Dalin E."/>
            <person name="Tice H."/>
            <person name="Bruce D."/>
            <person name="Goodwin L."/>
            <person name="Pitluck S."/>
            <person name="Sims D."/>
            <person name="Kiss H."/>
            <person name="Brettin T."/>
            <person name="Detter J.C."/>
            <person name="Han C."/>
            <person name="Larimer F."/>
            <person name="Land M."/>
            <person name="Hauser L."/>
            <person name="Kyrpides N."/>
            <person name="Ovchinnikova G."/>
            <person name="Bryant D.A."/>
            <person name="Richardson P."/>
        </authorList>
    </citation>
    <scope>NUCLEOTIDE SEQUENCE [LARGE SCALE GENOMIC DNA]</scope>
    <source>
        <strain>ATCC 29364 / DSM 637 / Y-400-fl</strain>
    </source>
</reference>
<keyword id="KW-0149">Chlorophyll biosynthesis</keyword>
<keyword id="KW-0963">Cytoplasm</keyword>
<keyword id="KW-0413">Isomerase</keyword>
<keyword id="KW-0627">Porphyrin biosynthesis</keyword>
<keyword id="KW-0663">Pyridoxal phosphate</keyword>
<protein>
    <recommendedName>
        <fullName evidence="1">Glutamate-1-semialdehyde 2,1-aminomutase</fullName>
        <shortName evidence="1">GSA</shortName>
        <ecNumber evidence="1">5.4.3.8</ecNumber>
    </recommendedName>
    <alternativeName>
        <fullName evidence="1">Glutamate-1-semialdehyde aminotransferase</fullName>
        <shortName evidence="1">GSA-AT</shortName>
    </alternativeName>
</protein>
<sequence length="443" mass="46746">MSVVTERYSRSQADYAAAREVIPGGVNSPVRAFRGVGGIPIFFERGQGAYVWDVDGNRYIDYVLSWGPLLLGHAHPAVVEAITLQAQRGTSFGAPTELETELARLVIELVPSIEQIRFVNSGTEATMSALRLARAATGRRLIVKFNGCYHGHADMLLVQAGSGVATLGLPDSPGVPPSVAAETITIEYNDLDAAAALFANRGAEIAAVIVEPIAANMGFVLPKPGFLSGLRELTQTHGAIFILDEVMTGFRVAAGGAQALWGLDPDLTCLGKVIGGGLPVGAYAGKRQLMQLVAPAGPMYQAGTLSGNPLAMTAGLTTLRTAFGGDAGAFQQAVTRTARLADGLRMLGERYRIPVQVGNVGTMFGCYFLRQEGSQITSYAEAKAYADSQRYARFFWAMADQGIYLAPSQFEAGFLSTAHSDADIDETLAAAEVAFAGLVSSAE</sequence>
<gene>
    <name evidence="1" type="primary">hemL</name>
    <name type="ordered locus">Chy400_2807</name>
</gene>
<comment type="catalytic activity">
    <reaction evidence="1">
        <text>(S)-4-amino-5-oxopentanoate = 5-aminolevulinate</text>
        <dbReference type="Rhea" id="RHEA:14265"/>
        <dbReference type="ChEBI" id="CHEBI:57501"/>
        <dbReference type="ChEBI" id="CHEBI:356416"/>
        <dbReference type="EC" id="5.4.3.8"/>
    </reaction>
</comment>
<comment type="cofactor">
    <cofactor evidence="1">
        <name>pyridoxal 5'-phosphate</name>
        <dbReference type="ChEBI" id="CHEBI:597326"/>
    </cofactor>
</comment>
<comment type="pathway">
    <text evidence="1">Porphyrin-containing compound metabolism; protoporphyrin-IX biosynthesis; 5-aminolevulinate from L-glutamyl-tRNA(Glu): step 2/2.</text>
</comment>
<comment type="pathway">
    <text evidence="1">Porphyrin-containing compound metabolism; chlorophyll biosynthesis.</text>
</comment>
<comment type="subunit">
    <text evidence="1">Homodimer.</text>
</comment>
<comment type="subcellular location">
    <subcellularLocation>
        <location evidence="1">Cytoplasm</location>
    </subcellularLocation>
</comment>
<comment type="similarity">
    <text evidence="1">Belongs to the class-III pyridoxal-phosphate-dependent aminotransferase family. HemL subfamily.</text>
</comment>
<organism>
    <name type="scientific">Chloroflexus aurantiacus (strain ATCC 29364 / DSM 637 / Y-400-fl)</name>
    <dbReference type="NCBI Taxonomy" id="480224"/>
    <lineage>
        <taxon>Bacteria</taxon>
        <taxon>Bacillati</taxon>
        <taxon>Chloroflexota</taxon>
        <taxon>Chloroflexia</taxon>
        <taxon>Chloroflexales</taxon>
        <taxon>Chloroflexineae</taxon>
        <taxon>Chloroflexaceae</taxon>
        <taxon>Chloroflexus</taxon>
    </lineage>
</organism>
<accession>B9LKS0</accession>
<name>GSA_CHLSY</name>
<feature type="chain" id="PRO_1000201014" description="Glutamate-1-semialdehyde 2,1-aminomutase">
    <location>
        <begin position="1"/>
        <end position="443"/>
    </location>
</feature>
<feature type="modified residue" description="N6-(pyridoxal phosphate)lysine" evidence="1">
    <location>
        <position position="272"/>
    </location>
</feature>